<comment type="function">
    <text evidence="7 8 13 15">Catalyzes the first step in ubiquitin conjugation to mark cellular proteins for degradation through the ubiquitin-proteasome system (PubMed:1447181, PubMed:1606621, PubMed:33108101). Activates ubiquitin by first adenylating its C-terminal glycine residue with ATP, and thereafter linking this residue to the side chain of a cysteine residue in E1, yielding a ubiquitin-E1 thioester and free AMP (PubMed:1447181). Essential for the formation of radiation-induced foci, timely DNA repair and for response to replication stress. Promotes the recruitment of TP53BP1 and BRCA1 at DNA damage sites (PubMed:22456334).</text>
</comment>
<comment type="catalytic activity">
    <reaction evidence="19">
        <text>ATP + ubiquitin + [E1 ubiquitin-activating enzyme]-L-cysteine = AMP + diphosphate + S-ubiquitinyl-[E1 ubiquitin-activating enzyme]-L-cysteine.</text>
        <dbReference type="EC" id="6.2.1.45"/>
    </reaction>
</comment>
<comment type="pathway">
    <text evidence="7 8">Protein modification; protein ubiquitination.</text>
</comment>
<comment type="subunit">
    <text evidence="1 10">Monomer (By similarity). Interacts with GAN (via BTB domain).</text>
</comment>
<comment type="interaction">
    <interactant intactId="EBI-709688">
        <id>P22314</id>
    </interactant>
    <interactant intactId="EBI-764342">
        <id>Q9H2C0</id>
        <label>GAN</label>
    </interactant>
    <organismsDiffer>false</organismsDiffer>
    <experiments>3</experiments>
</comment>
<comment type="interaction">
    <interactant intactId="EBI-709688">
        <id>P22314</id>
    </interactant>
    <interactant intactId="EBI-466029">
        <id>P42858</id>
        <label>HTT</label>
    </interactant>
    <organismsDiffer>false</organismsDiffer>
    <experiments>3</experiments>
</comment>
<comment type="interaction">
    <interactant intactId="EBI-709688">
        <id>P22314</id>
    </interactant>
    <interactant intactId="EBI-1058491">
        <id>Q96FW1</id>
        <label>OTUB1</label>
    </interactant>
    <organismsDiffer>false</organismsDiffer>
    <experiments>4</experiments>
</comment>
<comment type="interaction">
    <interactant intactId="EBI-709688">
        <id>P22314</id>
    </interactant>
    <interactant intactId="EBI-3650647">
        <id>Q9BUZ4</id>
        <label>TRAF4</label>
    </interactant>
    <organismsDiffer>false</organismsDiffer>
    <experiments>3</experiments>
</comment>
<comment type="interaction">
    <interactant intactId="EBI-709688">
        <id>P22314</id>
    </interactant>
    <interactant intactId="EBI-80168">
        <id>P63279</id>
        <label>UBE2I</label>
    </interactant>
    <organismsDiffer>false</organismsDiffer>
    <experiments>2</experiments>
</comment>
<comment type="interaction">
    <interactant intactId="EBI-709688">
        <id>P22314</id>
    </interactant>
    <interactant intactId="EBI-743923">
        <id>O00308</id>
        <label>WWP2</label>
    </interactant>
    <organismsDiffer>false</organismsDiffer>
    <experiments>3</experiments>
</comment>
<comment type="interaction">
    <interactant intactId="EBI-709688">
        <id>P22314</id>
    </interactant>
    <interactant intactId="EBI-6248077">
        <id>Q76353</id>
    </interactant>
    <organismsDiffer>true</organismsDiffer>
    <experiments>2</experiments>
</comment>
<comment type="subcellular location">
    <subcellularLocation>
        <location evidence="6">Cytoplasm</location>
    </subcellularLocation>
    <subcellularLocation>
        <location evidence="6">Mitochondrion</location>
    </subcellularLocation>
    <subcellularLocation>
        <location evidence="6 13">Nucleus</location>
    </subcellularLocation>
</comment>
<comment type="subcellular location">
    <molecule>Isoform 1</molecule>
    <subcellularLocation>
        <location evidence="15 16 17">Nucleus</location>
    </subcellularLocation>
</comment>
<comment type="subcellular location">
    <molecule>Isoform 2</molecule>
    <subcellularLocation>
        <location evidence="15 16">Cytoplasm</location>
    </subcellularLocation>
</comment>
<comment type="alternative products">
    <event type="alternative initiation"/>
    <isoform>
        <id>P22314-1</id>
        <name>1</name>
        <name>E1a</name>
        <sequence type="displayed"/>
    </isoform>
    <isoform>
        <id>P22314-2</id>
        <name>2</name>
        <name>E1b</name>
        <sequence type="described" ref="VSP_055913"/>
    </isoform>
</comment>
<comment type="tissue specificity">
    <text evidence="12">Detected in erythrocytes (at protein level). Ubiquitous.</text>
</comment>
<comment type="domain">
    <text>The first 11 amino acids are essential for phosphorylation and exclusive nuclear localization.</text>
</comment>
<comment type="PTM">
    <text evidence="9">ISGylated.</text>
</comment>
<comment type="disease" evidence="11 14">
    <disease id="DI-01059">
        <name>Spinal muscular atrophy X-linked 2</name>
        <acronym>SMAX2</acronym>
        <description>A lethal infantile form of spinal muscular atrophy, a neuromuscular disorder characterized by degeneration of the anterior horn cells of the spinal cord, leading to symmetrical muscle weakness and atrophy. Clinical features include hypotonia, areflexia, and multiple congenital contractures.</description>
        <dbReference type="MIM" id="301830"/>
    </disease>
    <text>The disease is caused by variants affecting the gene represented in this entry.</text>
</comment>
<comment type="disease" evidence="15">
    <disease id="DI-05955">
        <name>VEXAS syndrome</name>
        <acronym>VEXAS</acronym>
        <description>A sporadic, often fatal, treatment-refractory inflammatory syndrome that develops in late adulthood. Clinical features include fevers, cytopenias, characteristic vacuoles in myeloid and erythroid precursor cells, dysplastic bone marrow, neutrophilic cutaneous and pulmonary inflammation, chondritis, and vasculitis. The disease affects only males and is associated with de novo somatic mutations.</description>
        <dbReference type="MIM" id="301054"/>
    </disease>
    <text evidence="15">The disease is caused by variants affecting the gene represented in this entry. Somatic variants affecting the initiator methionine of isoform 2 are recurrently found in VEXAS patients. These variants cause loss of isoform 2 and production of a shorter isoform with strongly reduced enzymatic activity from a downstream methionine (Met-67).</text>
</comment>
<comment type="miscellaneous">
    <text evidence="2">There are two active sites within the E1 molecule, allowing it to accommodate two ubiquitin moieties at a time, with a new ubiquitin forming an adenylate intermediate as the previous one is transferred to the thiol site.</text>
</comment>
<comment type="similarity">
    <text evidence="18">Belongs to the ubiquitin-activating E1 family.</text>
</comment>
<sequence length="1058" mass="117849">MSSSPLSKKRRVSGPDPKPGSNCSPAQSVLSEVPSVPTNGMAKNGSEADIDEGLYSRQLYVLGHEAMKRLQTSSVLVSGLRGLGVEIAKNIILGGVKAVTLHDQGTAQWADLSSQFYLREEDIGKNRAEVSQPRLAELNSYVPVTAYTGPLVEDFLSGFQVVVLTNTPLEDQLRVGEFCHNRGIKLVVADTRGLFGQLFCDFGEEMILTDSNGEQPLSAMVSMVTKDNPGVVTCLDEARHGFESGDFVSFSEVQGMVELNGNQPMEIKVLGPYTFSICDTSNFSDYIRGGIVSQVKVPKKISFKSLVASLAEPDFVVTDFAKFSRPAQLHIGFQALHQFCAQHGRPPRPRNEEDAAELVALAQAVNARALPAVQQNNLDEDLIRKLAYVAAGDLAPINAFIGGLAAQEVMKACSGKFMPIMQWLYFDALECLPEDKEVLTEDKCLQRQNRYDGQVAVFGSDLQEKLGKQKYFLVGAGAIGCELLKNFAMIGLGCGEGGEIIVTDMDTIEKSNLNRQFLFRPWDVTKLKSDTAAAAVRQMNPHIRVTSHQNRVGPDTERIYDDDFFQNLDGVANALDNVDARMYMDRRCVYYRKPLLESGTLGTKGNVQVVIPFLTESYSSSQDPPEKSIPICTLKNFPNAIEHTLQWARDEFEGLFKQPAENVNQYLTDPKFVERTLRLAGTQPLEVLEAVQRSLVLQRPQTWADCVTWACHHWHTQYSNNIRQLLHNFPPDQLTSSGAPFWSGPKRCPHPLTFDVNNPLHLDYVMAAANLFAQTYGLTGSQDRAAVATFLQSVQVPEFTPKSGVKIHVSDQELQSANASVDDSRLEELKATLPSPDKLPGFKMYPIDFEKDDDSNFHMDFIVAASNLRAENYDIPSADRHKSKLIAGKIIPAIATTTAAVVGLVCLELYKVVQGHRQLDSYKNGFLNLALPFFGFSEPLAAPRHQYYNQEWTLWDRFEVQGLQPNGEEMTLKQFLDYFKTEHKLEITMLSQGVSMLYSFFMPAAKLKERLDQPMTEIVSRVSKRKLGRHVRALVLELCCNDESGEDVEVPYVRYTIR</sequence>
<name>UBA1_HUMAN</name>
<gene>
    <name type="primary">UBA1</name>
    <name type="synonym">A1S9T</name>
    <name type="synonym">UBE1</name>
</gene>
<dbReference type="EC" id="6.2.1.45" evidence="19"/>
<dbReference type="EMBL" id="X56976">
    <property type="protein sequence ID" value="CAA40296.1"/>
    <property type="molecule type" value="mRNA"/>
</dbReference>
<dbReference type="EMBL" id="M58028">
    <property type="protein sequence ID" value="AAA61246.1"/>
    <property type="molecule type" value="mRNA"/>
</dbReference>
<dbReference type="EMBL" id="AL513366">
    <property type="status" value="NOT_ANNOTATED_CDS"/>
    <property type="molecule type" value="Genomic_DNA"/>
</dbReference>
<dbReference type="EMBL" id="CH471164">
    <property type="protein sequence ID" value="EAW59290.1"/>
    <property type="molecule type" value="Genomic_DNA"/>
</dbReference>
<dbReference type="EMBL" id="BC013041">
    <property type="protein sequence ID" value="AAH13041.1"/>
    <property type="molecule type" value="mRNA"/>
</dbReference>
<dbReference type="EMBL" id="X52897">
    <property type="protein sequence ID" value="CAA37078.1"/>
    <property type="molecule type" value="mRNA"/>
</dbReference>
<dbReference type="CCDS" id="CCDS14275.1">
    <molecule id="P22314-1"/>
</dbReference>
<dbReference type="PIR" id="A38564">
    <property type="entry name" value="A38564"/>
</dbReference>
<dbReference type="RefSeq" id="NP_003325.2">
    <molecule id="P22314-1"/>
    <property type="nucleotide sequence ID" value="NM_003334.3"/>
</dbReference>
<dbReference type="RefSeq" id="NP_695012.1">
    <molecule id="P22314-1"/>
    <property type="nucleotide sequence ID" value="NM_153280.3"/>
</dbReference>
<dbReference type="RefSeq" id="XP_016885269.1">
    <molecule id="P22314-1"/>
    <property type="nucleotide sequence ID" value="XM_017029780.2"/>
</dbReference>
<dbReference type="RefSeq" id="XP_016885270.1">
    <property type="nucleotide sequence ID" value="XM_017029781.1"/>
</dbReference>
<dbReference type="RefSeq" id="XP_047298380.1">
    <molecule id="P22314-1"/>
    <property type="nucleotide sequence ID" value="XM_047442424.1"/>
</dbReference>
<dbReference type="RefSeq" id="XP_047298381.1">
    <molecule id="P22314-1"/>
    <property type="nucleotide sequence ID" value="XM_047442425.1"/>
</dbReference>
<dbReference type="RefSeq" id="XP_054183670.1">
    <molecule id="P22314-1"/>
    <property type="nucleotide sequence ID" value="XM_054327695.1"/>
</dbReference>
<dbReference type="RefSeq" id="XP_054183671.1">
    <molecule id="P22314-1"/>
    <property type="nucleotide sequence ID" value="XM_054327696.1"/>
</dbReference>
<dbReference type="PDB" id="4P22">
    <property type="method" value="X-ray"/>
    <property type="resolution" value="2.75 A"/>
    <property type="chains" value="A/B=1-439"/>
</dbReference>
<dbReference type="PDB" id="6DC6">
    <property type="method" value="X-ray"/>
    <property type="resolution" value="3.14 A"/>
    <property type="chains" value="A/C=49-1058"/>
</dbReference>
<dbReference type="PDB" id="7PYV">
    <property type="method" value="X-ray"/>
    <property type="resolution" value="3.27 A"/>
    <property type="chains" value="A/B=631-899"/>
</dbReference>
<dbReference type="PDBsum" id="4P22"/>
<dbReference type="PDBsum" id="6DC6"/>
<dbReference type="PDBsum" id="7PYV"/>
<dbReference type="SMR" id="P22314"/>
<dbReference type="BioGRID" id="113165">
    <property type="interactions" value="379"/>
</dbReference>
<dbReference type="DIP" id="DIP-33686N"/>
<dbReference type="FunCoup" id="P22314">
    <property type="interactions" value="3873"/>
</dbReference>
<dbReference type="IntAct" id="P22314">
    <property type="interactions" value="199"/>
</dbReference>
<dbReference type="MINT" id="P22314"/>
<dbReference type="STRING" id="9606.ENSP00000338413"/>
<dbReference type="BindingDB" id="P22314"/>
<dbReference type="ChEMBL" id="CHEMBL5924"/>
<dbReference type="DrugBank" id="DB04119">
    <property type="generic name" value="Hexatantalum Dodecabromide"/>
</dbReference>
<dbReference type="DrugBank" id="DB04216">
    <property type="generic name" value="Quercetin"/>
</dbReference>
<dbReference type="GlyCosmos" id="P22314">
    <property type="glycosylation" value="3 sites, 1 glycan"/>
</dbReference>
<dbReference type="GlyGen" id="P22314">
    <property type="glycosylation" value="8 sites, 2 N-linked glycans (2 sites), 1 O-linked glycan (6 sites)"/>
</dbReference>
<dbReference type="iPTMnet" id="P22314"/>
<dbReference type="MetOSite" id="P22314"/>
<dbReference type="PhosphoSitePlus" id="P22314"/>
<dbReference type="SwissPalm" id="P22314"/>
<dbReference type="BioMuta" id="UBA1"/>
<dbReference type="DMDM" id="24418865"/>
<dbReference type="REPRODUCTION-2DPAGE" id="IPI00645078"/>
<dbReference type="CPTAC" id="CPTAC-136"/>
<dbReference type="CPTAC" id="CPTAC-137"/>
<dbReference type="jPOST" id="P22314"/>
<dbReference type="MassIVE" id="P22314"/>
<dbReference type="PaxDb" id="9606-ENSP00000338413"/>
<dbReference type="PeptideAtlas" id="P22314"/>
<dbReference type="PRIDE" id="P22314"/>
<dbReference type="ProteomicsDB" id="53983">
    <molecule id="P22314-1"/>
</dbReference>
<dbReference type="Pumba" id="P22314"/>
<dbReference type="Antibodypedia" id="345">
    <property type="antibodies" value="418 antibodies from 40 providers"/>
</dbReference>
<dbReference type="CPTC" id="P22314">
    <property type="antibodies" value="3 antibodies"/>
</dbReference>
<dbReference type="DNASU" id="7317"/>
<dbReference type="Ensembl" id="ENST00000335972.11">
    <molecule id="P22314-1"/>
    <property type="protein sequence ID" value="ENSP00000338413.6"/>
    <property type="gene ID" value="ENSG00000130985.17"/>
</dbReference>
<dbReference type="Ensembl" id="ENST00000377351.8">
    <molecule id="P22314-1"/>
    <property type="protein sequence ID" value="ENSP00000366568.4"/>
    <property type="gene ID" value="ENSG00000130985.17"/>
</dbReference>
<dbReference type="GeneID" id="7317"/>
<dbReference type="KEGG" id="hsa:7317"/>
<dbReference type="MANE-Select" id="ENST00000335972.11">
    <property type="protein sequence ID" value="ENSP00000338413.6"/>
    <property type="RefSeq nucleotide sequence ID" value="NM_003334.4"/>
    <property type="RefSeq protein sequence ID" value="NP_003325.2"/>
</dbReference>
<dbReference type="UCSC" id="uc004dhj.5">
    <molecule id="P22314-1"/>
    <property type="organism name" value="human"/>
</dbReference>
<dbReference type="AGR" id="HGNC:12469"/>
<dbReference type="CTD" id="7317"/>
<dbReference type="DisGeNET" id="7317"/>
<dbReference type="GeneCards" id="UBA1"/>
<dbReference type="GeneReviews" id="UBA1"/>
<dbReference type="HGNC" id="HGNC:12469">
    <property type="gene designation" value="UBA1"/>
</dbReference>
<dbReference type="HPA" id="ENSG00000130985">
    <property type="expression patterns" value="Low tissue specificity"/>
</dbReference>
<dbReference type="MalaCards" id="UBA1"/>
<dbReference type="MIM" id="301054">
    <property type="type" value="phenotype"/>
</dbReference>
<dbReference type="MIM" id="301830">
    <property type="type" value="phenotype"/>
</dbReference>
<dbReference type="MIM" id="314370">
    <property type="type" value="gene"/>
</dbReference>
<dbReference type="neXtProt" id="NX_P22314"/>
<dbReference type="OpenTargets" id="ENSG00000130985"/>
<dbReference type="Orphanet" id="1145">
    <property type="disease" value="Infantile-onset X-linked spinal muscular atrophy"/>
</dbReference>
<dbReference type="Orphanet" id="596753">
    <property type="disease" value="VEXAS syndrome"/>
</dbReference>
<dbReference type="PharmGKB" id="PA37119"/>
<dbReference type="VEuPathDB" id="HostDB:ENSG00000130985"/>
<dbReference type="eggNOG" id="KOG2012">
    <property type="taxonomic scope" value="Eukaryota"/>
</dbReference>
<dbReference type="GeneTree" id="ENSGT00940000158975"/>
<dbReference type="HOGENOM" id="CLU_002556_0_0_1"/>
<dbReference type="InParanoid" id="P22314"/>
<dbReference type="OMA" id="GANLHAF"/>
<dbReference type="OrthoDB" id="10252231at2759"/>
<dbReference type="PAN-GO" id="P22314">
    <property type="GO annotations" value="6 GO annotations based on evolutionary models"/>
</dbReference>
<dbReference type="PhylomeDB" id="P22314"/>
<dbReference type="TreeFam" id="TF300586"/>
<dbReference type="BioCyc" id="MetaCyc:HS05465-MONOMER"/>
<dbReference type="BRENDA" id="2.3.2.23">
    <property type="organism ID" value="2681"/>
</dbReference>
<dbReference type="BRENDA" id="6.2.1.45">
    <property type="organism ID" value="2681"/>
</dbReference>
<dbReference type="BRENDA" id="6.2.1.64">
    <property type="organism ID" value="2681"/>
</dbReference>
<dbReference type="PathwayCommons" id="P22314"/>
<dbReference type="Reactome" id="R-HSA-8866652">
    <property type="pathway name" value="Synthesis of active ubiquitin: roles of E1 and E2 enzymes"/>
</dbReference>
<dbReference type="Reactome" id="R-HSA-983168">
    <property type="pathway name" value="Antigen processing: Ubiquitination &amp; Proteasome degradation"/>
</dbReference>
<dbReference type="SignaLink" id="P22314"/>
<dbReference type="SIGNOR" id="P22314"/>
<dbReference type="UniPathway" id="UPA00143"/>
<dbReference type="BioGRID-ORCS" id="7317">
    <property type="hits" value="455 hits in 795 CRISPR screens"/>
</dbReference>
<dbReference type="CD-CODE" id="91857CE7">
    <property type="entry name" value="Nucleolus"/>
</dbReference>
<dbReference type="CD-CODE" id="DEE660B4">
    <property type="entry name" value="Stress granule"/>
</dbReference>
<dbReference type="CD-CODE" id="FB4E32DD">
    <property type="entry name" value="Presynaptic clusters and postsynaptic densities"/>
</dbReference>
<dbReference type="ChiTaRS" id="UBA1">
    <property type="organism name" value="human"/>
</dbReference>
<dbReference type="EvolutionaryTrace" id="P22314"/>
<dbReference type="GeneWiki" id="UBA1"/>
<dbReference type="GenomeRNAi" id="7317"/>
<dbReference type="Pharos" id="P22314">
    <property type="development level" value="Tbio"/>
</dbReference>
<dbReference type="PRO" id="PR:P22314"/>
<dbReference type="Proteomes" id="UP000005640">
    <property type="component" value="Chromosome X"/>
</dbReference>
<dbReference type="RNAct" id="P22314">
    <property type="molecule type" value="protein"/>
</dbReference>
<dbReference type="Bgee" id="ENSG00000130985">
    <property type="expression patterns" value="Expressed in endometrium epithelium and 212 other cell types or tissues"/>
</dbReference>
<dbReference type="ExpressionAtlas" id="P22314">
    <property type="expression patterns" value="baseline and differential"/>
</dbReference>
<dbReference type="GO" id="GO:0005737">
    <property type="term" value="C:cytoplasm"/>
    <property type="evidence" value="ECO:0000314"/>
    <property type="project" value="UniProtKB"/>
</dbReference>
<dbReference type="GO" id="GO:0005829">
    <property type="term" value="C:cytosol"/>
    <property type="evidence" value="ECO:0000314"/>
    <property type="project" value="HPA"/>
</dbReference>
<dbReference type="GO" id="GO:0070062">
    <property type="term" value="C:extracellular exosome"/>
    <property type="evidence" value="ECO:0007005"/>
    <property type="project" value="UniProtKB"/>
</dbReference>
<dbReference type="GO" id="GO:0005739">
    <property type="term" value="C:mitochondrion"/>
    <property type="evidence" value="ECO:0000314"/>
    <property type="project" value="UniProtKB"/>
</dbReference>
<dbReference type="GO" id="GO:0005654">
    <property type="term" value="C:nucleoplasm"/>
    <property type="evidence" value="ECO:0000314"/>
    <property type="project" value="HPA"/>
</dbReference>
<dbReference type="GO" id="GO:0005634">
    <property type="term" value="C:nucleus"/>
    <property type="evidence" value="ECO:0000314"/>
    <property type="project" value="UniProtKB"/>
</dbReference>
<dbReference type="GO" id="GO:0005524">
    <property type="term" value="F:ATP binding"/>
    <property type="evidence" value="ECO:0007669"/>
    <property type="project" value="UniProtKB-KW"/>
</dbReference>
<dbReference type="GO" id="GO:0003723">
    <property type="term" value="F:RNA binding"/>
    <property type="evidence" value="ECO:0007005"/>
    <property type="project" value="UniProtKB"/>
</dbReference>
<dbReference type="GO" id="GO:0004839">
    <property type="term" value="F:ubiquitin activating enzyme activity"/>
    <property type="evidence" value="ECO:0000314"/>
    <property type="project" value="MGI"/>
</dbReference>
<dbReference type="GO" id="GO:0006974">
    <property type="term" value="P:DNA damage response"/>
    <property type="evidence" value="ECO:0000314"/>
    <property type="project" value="UniProtKB"/>
</dbReference>
<dbReference type="GO" id="GO:0016567">
    <property type="term" value="P:protein ubiquitination"/>
    <property type="evidence" value="ECO:0000318"/>
    <property type="project" value="GO_Central"/>
</dbReference>
<dbReference type="GO" id="GO:0006511">
    <property type="term" value="P:ubiquitin-dependent protein catabolic process"/>
    <property type="evidence" value="ECO:0000318"/>
    <property type="project" value="GO_Central"/>
</dbReference>
<dbReference type="CDD" id="cd01491">
    <property type="entry name" value="Ube1_repeat1"/>
    <property type="match status" value="1"/>
</dbReference>
<dbReference type="CDD" id="cd01490">
    <property type="entry name" value="Ube1_repeat2"/>
    <property type="match status" value="1"/>
</dbReference>
<dbReference type="FunFam" id="1.10.10.2660:FF:000001">
    <property type="entry name" value="Ubiquitin-activating enzyme E1 1"/>
    <property type="match status" value="1"/>
</dbReference>
<dbReference type="FunFam" id="3.40.50.12550:FF:000001">
    <property type="entry name" value="Ubiquitin-activating enzyme E1 1"/>
    <property type="match status" value="1"/>
</dbReference>
<dbReference type="FunFam" id="3.40.50.720:FF:000015">
    <property type="entry name" value="Ubiquitin-activating enzyme E1 1"/>
    <property type="match status" value="1"/>
</dbReference>
<dbReference type="FunFam" id="3.10.290.60:FF:000002">
    <property type="entry name" value="Ubiquitin-like modifier-activating enzyme 1"/>
    <property type="match status" value="1"/>
</dbReference>
<dbReference type="FunFam" id="2.40.30.180:FF:000001">
    <property type="entry name" value="ubiquitin-like modifier-activating enzyme 1"/>
    <property type="match status" value="1"/>
</dbReference>
<dbReference type="FunFam" id="3.50.50.80:FF:000001">
    <property type="entry name" value="ubiquitin-like modifier-activating enzyme 1"/>
    <property type="match status" value="1"/>
</dbReference>
<dbReference type="Gene3D" id="3.40.50.720">
    <property type="entry name" value="NAD(P)-binding Rossmann-like Domain"/>
    <property type="match status" value="1"/>
</dbReference>
<dbReference type="Gene3D" id="2.40.30.180">
    <property type="entry name" value="Ubiquitin-activating enzyme E1, FCCH domain"/>
    <property type="match status" value="1"/>
</dbReference>
<dbReference type="Gene3D" id="3.50.50.80">
    <property type="entry name" value="Ubiquitin-activating enzyme E1, inactive adenylation domain, subdomain 1"/>
    <property type="match status" value="1"/>
</dbReference>
<dbReference type="Gene3D" id="3.40.50.12550">
    <property type="entry name" value="Ubiquitin-activating enzyme E1, inactive adenylation domain, subdomain 2"/>
    <property type="match status" value="1"/>
</dbReference>
<dbReference type="Gene3D" id="1.10.10.2660">
    <property type="entry name" value="Ubiquitin-activating enzyme E1, SCCH domain"/>
    <property type="match status" value="1"/>
</dbReference>
<dbReference type="Gene3D" id="3.10.290.60">
    <property type="entry name" value="Ubiquitin-activating enzyme E1, UFD domain"/>
    <property type="match status" value="1"/>
</dbReference>
<dbReference type="InterPro" id="IPR032420">
    <property type="entry name" value="E1_4HB"/>
</dbReference>
<dbReference type="InterPro" id="IPR032418">
    <property type="entry name" value="E1_FCCH"/>
</dbReference>
<dbReference type="InterPro" id="IPR042302">
    <property type="entry name" value="E1_FCCH_sf"/>
</dbReference>
<dbReference type="InterPro" id="IPR045886">
    <property type="entry name" value="ThiF/MoeB/HesA"/>
</dbReference>
<dbReference type="InterPro" id="IPR000594">
    <property type="entry name" value="ThiF_NAD_FAD-bd"/>
</dbReference>
<dbReference type="InterPro" id="IPR018965">
    <property type="entry name" value="Ub-activating_enz_E1_C"/>
</dbReference>
<dbReference type="InterPro" id="IPR042449">
    <property type="entry name" value="Ub-E1_IAD_1"/>
</dbReference>
<dbReference type="InterPro" id="IPR038252">
    <property type="entry name" value="UBA_E1_C_sf"/>
</dbReference>
<dbReference type="InterPro" id="IPR019572">
    <property type="entry name" value="UBA_E1_SCCH"/>
</dbReference>
<dbReference type="InterPro" id="IPR042063">
    <property type="entry name" value="Ubi_acti_E1_SCCH"/>
</dbReference>
<dbReference type="InterPro" id="IPR035985">
    <property type="entry name" value="Ubiquitin-activating_enz"/>
</dbReference>
<dbReference type="InterPro" id="IPR018075">
    <property type="entry name" value="UBQ-activ_enz_E1"/>
</dbReference>
<dbReference type="InterPro" id="IPR018074">
    <property type="entry name" value="UBQ-activ_enz_E1_CS"/>
</dbReference>
<dbReference type="InterPro" id="IPR033127">
    <property type="entry name" value="UBQ-activ_enz_E1_Cys_AS"/>
</dbReference>
<dbReference type="InterPro" id="IPR000011">
    <property type="entry name" value="UBQ/SUMO-activ_enz_E1-like"/>
</dbReference>
<dbReference type="NCBIfam" id="TIGR01408">
    <property type="entry name" value="Ube1"/>
    <property type="match status" value="1"/>
</dbReference>
<dbReference type="PANTHER" id="PTHR10953">
    <property type="entry name" value="UBIQUITIN-ACTIVATING ENZYME E1"/>
    <property type="match status" value="1"/>
</dbReference>
<dbReference type="PANTHER" id="PTHR10953:SF155">
    <property type="entry name" value="UBIQUITIN-LIKE MODIFIER-ACTIVATING ENZYME 1"/>
    <property type="match status" value="1"/>
</dbReference>
<dbReference type="Pfam" id="PF16191">
    <property type="entry name" value="E1_4HB"/>
    <property type="match status" value="1"/>
</dbReference>
<dbReference type="Pfam" id="PF16190">
    <property type="entry name" value="E1_FCCH"/>
    <property type="match status" value="1"/>
</dbReference>
<dbReference type="Pfam" id="PF09358">
    <property type="entry name" value="E1_UFD"/>
    <property type="match status" value="1"/>
</dbReference>
<dbReference type="Pfam" id="PF00899">
    <property type="entry name" value="ThiF"/>
    <property type="match status" value="2"/>
</dbReference>
<dbReference type="Pfam" id="PF10585">
    <property type="entry name" value="UBA_E1_SCCH"/>
    <property type="match status" value="1"/>
</dbReference>
<dbReference type="PRINTS" id="PR01849">
    <property type="entry name" value="UBIQUITINACT"/>
</dbReference>
<dbReference type="SMART" id="SM00985">
    <property type="entry name" value="UBA_e1_C"/>
    <property type="match status" value="1"/>
</dbReference>
<dbReference type="SUPFAM" id="SSF69572">
    <property type="entry name" value="Activating enzymes of the ubiquitin-like proteins"/>
    <property type="match status" value="2"/>
</dbReference>
<dbReference type="PROSITE" id="PS00536">
    <property type="entry name" value="UBIQUITIN_ACTIVAT_1"/>
    <property type="match status" value="1"/>
</dbReference>
<dbReference type="PROSITE" id="PS00865">
    <property type="entry name" value="UBIQUITIN_ACTIVAT_2"/>
    <property type="match status" value="1"/>
</dbReference>
<proteinExistence type="evidence at protein level"/>
<protein>
    <recommendedName>
        <fullName>Ubiquitin-like modifier-activating enzyme 1</fullName>
        <ecNumber evidence="19">6.2.1.45</ecNumber>
    </recommendedName>
    <alternativeName>
        <fullName>Protein A1S9</fullName>
    </alternativeName>
    <alternativeName>
        <fullName>Ubiquitin-activating enzyme E1</fullName>
    </alternativeName>
</protein>
<keyword id="KW-0002">3D-structure</keyword>
<keyword id="KW-0007">Acetylation</keyword>
<keyword id="KW-0024">Alternative initiation</keyword>
<keyword id="KW-0067">ATP-binding</keyword>
<keyword id="KW-0963">Cytoplasm</keyword>
<keyword id="KW-0903">Direct protein sequencing</keyword>
<keyword id="KW-0225">Disease variant</keyword>
<keyword id="KW-0436">Ligase</keyword>
<keyword id="KW-0496">Mitochondrion</keyword>
<keyword id="KW-0523">Neurodegeneration</keyword>
<keyword id="KW-0547">Nucleotide-binding</keyword>
<keyword id="KW-0539">Nucleus</keyword>
<keyword id="KW-0597">Phosphoprotein</keyword>
<keyword id="KW-1267">Proteomics identification</keyword>
<keyword id="KW-1185">Reference proteome</keyword>
<keyword id="KW-0677">Repeat</keyword>
<keyword id="KW-0832">Ubl conjugation</keyword>
<keyword id="KW-0833">Ubl conjugation pathway</keyword>
<organism>
    <name type="scientific">Homo sapiens</name>
    <name type="common">Human</name>
    <dbReference type="NCBI Taxonomy" id="9606"/>
    <lineage>
        <taxon>Eukaryota</taxon>
        <taxon>Metazoa</taxon>
        <taxon>Chordata</taxon>
        <taxon>Craniata</taxon>
        <taxon>Vertebrata</taxon>
        <taxon>Euteleostomi</taxon>
        <taxon>Mammalia</taxon>
        <taxon>Eutheria</taxon>
        <taxon>Euarchontoglires</taxon>
        <taxon>Primates</taxon>
        <taxon>Haplorrhini</taxon>
        <taxon>Catarrhini</taxon>
        <taxon>Hominidae</taxon>
        <taxon>Homo</taxon>
    </lineage>
</organism>
<reference key="1">
    <citation type="journal article" date="1992" name="Cell Struct. Funct.">
        <title>Complementation by a cloned human ubiquitin-activating enzyme E1 of the S-phase-arrested mouse FM3A cell mutant with thermolabile E1.</title>
        <authorList>
            <person name="Ayusawa D."/>
            <person name="Kaneda S."/>
            <person name="Itoh Y."/>
            <person name="Yasuda H."/>
            <person name="Murakami Y."/>
            <person name="Sugasawa K."/>
            <person name="Hanaoka F."/>
            <person name="Seno T."/>
        </authorList>
    </citation>
    <scope>NUCLEOTIDE SEQUENCE [MRNA] (ISOFORM 1)</scope>
    <scope>FUNCTION</scope>
    <scope>PATHWAY</scope>
</reference>
<reference key="2">
    <citation type="journal article" date="1991" name="Proc. Natl. Acad. Sci. U.S.A.">
        <title>Molecular cloning, sequence, and tissue distribution of the human ubiquitin-activating enzyme E1.</title>
        <authorList>
            <person name="Handley P.M."/>
            <person name="Mueckler M."/>
            <person name="Siegel N.R."/>
            <person name="Ciechanover A."/>
            <person name="Schwartz A.L."/>
        </authorList>
    </citation>
    <scope>NUCLEOTIDE SEQUENCE [MRNA] (ISOFORM 1)</scope>
    <scope>PROTEIN SEQUENCE OF 136-158; 369-383; 417-430 AND 559-580</scope>
    <scope>TISSUE SPECIFICITY</scope>
    <source>
        <tissue>Placenta</tissue>
    </source>
</reference>
<reference key="3">
    <citation type="journal article" date="1991" name="Proc. Natl. Acad. Sci. U.S.A.">
        <authorList>
            <person name="Handley P.M."/>
            <person name="Mueckler M."/>
            <person name="Siegel N.R."/>
            <person name="Ciechanover A."/>
            <person name="Schwartz A.L."/>
        </authorList>
    </citation>
    <scope>ERRATUM OF PUBMED:1986373</scope>
</reference>
<reference key="4">
    <citation type="journal article" date="2005" name="Nature">
        <title>The DNA sequence of the human X chromosome.</title>
        <authorList>
            <person name="Ross M.T."/>
            <person name="Grafham D.V."/>
            <person name="Coffey A.J."/>
            <person name="Scherer S."/>
            <person name="McLay K."/>
            <person name="Muzny D."/>
            <person name="Platzer M."/>
            <person name="Howell G.R."/>
            <person name="Burrows C."/>
            <person name="Bird C.P."/>
            <person name="Frankish A."/>
            <person name="Lovell F.L."/>
            <person name="Howe K.L."/>
            <person name="Ashurst J.L."/>
            <person name="Fulton R.S."/>
            <person name="Sudbrak R."/>
            <person name="Wen G."/>
            <person name="Jones M.C."/>
            <person name="Hurles M.E."/>
            <person name="Andrews T.D."/>
            <person name="Scott C.E."/>
            <person name="Searle S."/>
            <person name="Ramser J."/>
            <person name="Whittaker A."/>
            <person name="Deadman R."/>
            <person name="Carter N.P."/>
            <person name="Hunt S.E."/>
            <person name="Chen R."/>
            <person name="Cree A."/>
            <person name="Gunaratne P."/>
            <person name="Havlak P."/>
            <person name="Hodgson A."/>
            <person name="Metzker M.L."/>
            <person name="Richards S."/>
            <person name="Scott G."/>
            <person name="Steffen D."/>
            <person name="Sodergren E."/>
            <person name="Wheeler D.A."/>
            <person name="Worley K.C."/>
            <person name="Ainscough R."/>
            <person name="Ambrose K.D."/>
            <person name="Ansari-Lari M.A."/>
            <person name="Aradhya S."/>
            <person name="Ashwell R.I."/>
            <person name="Babbage A.K."/>
            <person name="Bagguley C.L."/>
            <person name="Ballabio A."/>
            <person name="Banerjee R."/>
            <person name="Barker G.E."/>
            <person name="Barlow K.F."/>
            <person name="Barrett I.P."/>
            <person name="Bates K.N."/>
            <person name="Beare D.M."/>
            <person name="Beasley H."/>
            <person name="Beasley O."/>
            <person name="Beck A."/>
            <person name="Bethel G."/>
            <person name="Blechschmidt K."/>
            <person name="Brady N."/>
            <person name="Bray-Allen S."/>
            <person name="Bridgeman A.M."/>
            <person name="Brown A.J."/>
            <person name="Brown M.J."/>
            <person name="Bonnin D."/>
            <person name="Bruford E.A."/>
            <person name="Buhay C."/>
            <person name="Burch P."/>
            <person name="Burford D."/>
            <person name="Burgess J."/>
            <person name="Burrill W."/>
            <person name="Burton J."/>
            <person name="Bye J.M."/>
            <person name="Carder C."/>
            <person name="Carrel L."/>
            <person name="Chako J."/>
            <person name="Chapman J.C."/>
            <person name="Chavez D."/>
            <person name="Chen E."/>
            <person name="Chen G."/>
            <person name="Chen Y."/>
            <person name="Chen Z."/>
            <person name="Chinault C."/>
            <person name="Ciccodicola A."/>
            <person name="Clark S.Y."/>
            <person name="Clarke G."/>
            <person name="Clee C.M."/>
            <person name="Clegg S."/>
            <person name="Clerc-Blankenburg K."/>
            <person name="Clifford K."/>
            <person name="Cobley V."/>
            <person name="Cole C.G."/>
            <person name="Conquer J.S."/>
            <person name="Corby N."/>
            <person name="Connor R.E."/>
            <person name="David R."/>
            <person name="Davies J."/>
            <person name="Davis C."/>
            <person name="Davis J."/>
            <person name="Delgado O."/>
            <person name="Deshazo D."/>
            <person name="Dhami P."/>
            <person name="Ding Y."/>
            <person name="Dinh H."/>
            <person name="Dodsworth S."/>
            <person name="Draper H."/>
            <person name="Dugan-Rocha S."/>
            <person name="Dunham A."/>
            <person name="Dunn M."/>
            <person name="Durbin K.J."/>
            <person name="Dutta I."/>
            <person name="Eades T."/>
            <person name="Ellwood M."/>
            <person name="Emery-Cohen A."/>
            <person name="Errington H."/>
            <person name="Evans K.L."/>
            <person name="Faulkner L."/>
            <person name="Francis F."/>
            <person name="Frankland J."/>
            <person name="Fraser A.E."/>
            <person name="Galgoczy P."/>
            <person name="Gilbert J."/>
            <person name="Gill R."/>
            <person name="Gloeckner G."/>
            <person name="Gregory S.G."/>
            <person name="Gribble S."/>
            <person name="Griffiths C."/>
            <person name="Grocock R."/>
            <person name="Gu Y."/>
            <person name="Gwilliam R."/>
            <person name="Hamilton C."/>
            <person name="Hart E.A."/>
            <person name="Hawes A."/>
            <person name="Heath P.D."/>
            <person name="Heitmann K."/>
            <person name="Hennig S."/>
            <person name="Hernandez J."/>
            <person name="Hinzmann B."/>
            <person name="Ho S."/>
            <person name="Hoffs M."/>
            <person name="Howden P.J."/>
            <person name="Huckle E.J."/>
            <person name="Hume J."/>
            <person name="Hunt P.J."/>
            <person name="Hunt A.R."/>
            <person name="Isherwood J."/>
            <person name="Jacob L."/>
            <person name="Johnson D."/>
            <person name="Jones S."/>
            <person name="de Jong P.J."/>
            <person name="Joseph S.S."/>
            <person name="Keenan S."/>
            <person name="Kelly S."/>
            <person name="Kershaw J.K."/>
            <person name="Khan Z."/>
            <person name="Kioschis P."/>
            <person name="Klages S."/>
            <person name="Knights A.J."/>
            <person name="Kosiura A."/>
            <person name="Kovar-Smith C."/>
            <person name="Laird G.K."/>
            <person name="Langford C."/>
            <person name="Lawlor S."/>
            <person name="Leversha M."/>
            <person name="Lewis L."/>
            <person name="Liu W."/>
            <person name="Lloyd C."/>
            <person name="Lloyd D.M."/>
            <person name="Loulseged H."/>
            <person name="Loveland J.E."/>
            <person name="Lovell J.D."/>
            <person name="Lozado R."/>
            <person name="Lu J."/>
            <person name="Lyne R."/>
            <person name="Ma J."/>
            <person name="Maheshwari M."/>
            <person name="Matthews L.H."/>
            <person name="McDowall J."/>
            <person name="McLaren S."/>
            <person name="McMurray A."/>
            <person name="Meidl P."/>
            <person name="Meitinger T."/>
            <person name="Milne S."/>
            <person name="Miner G."/>
            <person name="Mistry S.L."/>
            <person name="Morgan M."/>
            <person name="Morris S."/>
            <person name="Mueller I."/>
            <person name="Mullikin J.C."/>
            <person name="Nguyen N."/>
            <person name="Nordsiek G."/>
            <person name="Nyakatura G."/>
            <person name="O'dell C.N."/>
            <person name="Okwuonu G."/>
            <person name="Palmer S."/>
            <person name="Pandian R."/>
            <person name="Parker D."/>
            <person name="Parrish J."/>
            <person name="Pasternak S."/>
            <person name="Patel D."/>
            <person name="Pearce A.V."/>
            <person name="Pearson D.M."/>
            <person name="Pelan S.E."/>
            <person name="Perez L."/>
            <person name="Porter K.M."/>
            <person name="Ramsey Y."/>
            <person name="Reichwald K."/>
            <person name="Rhodes S."/>
            <person name="Ridler K.A."/>
            <person name="Schlessinger D."/>
            <person name="Schueler M.G."/>
            <person name="Sehra H.K."/>
            <person name="Shaw-Smith C."/>
            <person name="Shen H."/>
            <person name="Sheridan E.M."/>
            <person name="Shownkeen R."/>
            <person name="Skuce C.D."/>
            <person name="Smith M.L."/>
            <person name="Sotheran E.C."/>
            <person name="Steingruber H.E."/>
            <person name="Steward C.A."/>
            <person name="Storey R."/>
            <person name="Swann R.M."/>
            <person name="Swarbreck D."/>
            <person name="Tabor P.E."/>
            <person name="Taudien S."/>
            <person name="Taylor T."/>
            <person name="Teague B."/>
            <person name="Thomas K."/>
            <person name="Thorpe A."/>
            <person name="Timms K."/>
            <person name="Tracey A."/>
            <person name="Trevanion S."/>
            <person name="Tromans A.C."/>
            <person name="d'Urso M."/>
            <person name="Verduzco D."/>
            <person name="Villasana D."/>
            <person name="Waldron L."/>
            <person name="Wall M."/>
            <person name="Wang Q."/>
            <person name="Warren J."/>
            <person name="Warry G.L."/>
            <person name="Wei X."/>
            <person name="West A."/>
            <person name="Whitehead S.L."/>
            <person name="Whiteley M.N."/>
            <person name="Wilkinson J.E."/>
            <person name="Willey D.L."/>
            <person name="Williams G."/>
            <person name="Williams L."/>
            <person name="Williamson A."/>
            <person name="Williamson H."/>
            <person name="Wilming L."/>
            <person name="Woodmansey R.L."/>
            <person name="Wray P.W."/>
            <person name="Yen J."/>
            <person name="Zhang J."/>
            <person name="Zhou J."/>
            <person name="Zoghbi H."/>
            <person name="Zorilla S."/>
            <person name="Buck D."/>
            <person name="Reinhardt R."/>
            <person name="Poustka A."/>
            <person name="Rosenthal A."/>
            <person name="Lehrach H."/>
            <person name="Meindl A."/>
            <person name="Minx P.J."/>
            <person name="Hillier L.W."/>
            <person name="Willard H.F."/>
            <person name="Wilson R.K."/>
            <person name="Waterston R.H."/>
            <person name="Rice C.M."/>
            <person name="Vaudin M."/>
            <person name="Coulson A."/>
            <person name="Nelson D.L."/>
            <person name="Weinstock G."/>
            <person name="Sulston J.E."/>
            <person name="Durbin R.M."/>
            <person name="Hubbard T."/>
            <person name="Gibbs R.A."/>
            <person name="Beck S."/>
            <person name="Rogers J."/>
            <person name="Bentley D.R."/>
        </authorList>
    </citation>
    <scope>NUCLEOTIDE SEQUENCE [LARGE SCALE GENOMIC DNA]</scope>
</reference>
<reference key="5">
    <citation type="submission" date="2005-07" db="EMBL/GenBank/DDBJ databases">
        <authorList>
            <person name="Mural R.J."/>
            <person name="Istrail S."/>
            <person name="Sutton G.G."/>
            <person name="Florea L."/>
            <person name="Halpern A.L."/>
            <person name="Mobarry C.M."/>
            <person name="Lippert R."/>
            <person name="Walenz B."/>
            <person name="Shatkay H."/>
            <person name="Dew I."/>
            <person name="Miller J.R."/>
            <person name="Flanigan M.J."/>
            <person name="Edwards N.J."/>
            <person name="Bolanos R."/>
            <person name="Fasulo D."/>
            <person name="Halldorsson B.V."/>
            <person name="Hannenhalli S."/>
            <person name="Turner R."/>
            <person name="Yooseph S."/>
            <person name="Lu F."/>
            <person name="Nusskern D.R."/>
            <person name="Shue B.C."/>
            <person name="Zheng X.H."/>
            <person name="Zhong F."/>
            <person name="Delcher A.L."/>
            <person name="Huson D.H."/>
            <person name="Kravitz S.A."/>
            <person name="Mouchard L."/>
            <person name="Reinert K."/>
            <person name="Remington K.A."/>
            <person name="Clark A.G."/>
            <person name="Waterman M.S."/>
            <person name="Eichler E.E."/>
            <person name="Adams M.D."/>
            <person name="Hunkapiller M.W."/>
            <person name="Myers E.W."/>
            <person name="Venter J.C."/>
        </authorList>
    </citation>
    <scope>NUCLEOTIDE SEQUENCE [LARGE SCALE GENOMIC DNA]</scope>
</reference>
<reference key="6">
    <citation type="journal article" date="2004" name="Genome Res.">
        <title>The status, quality, and expansion of the NIH full-length cDNA project: the Mammalian Gene Collection (MGC).</title>
        <authorList>
            <consortium name="The MGC Project Team"/>
        </authorList>
    </citation>
    <scope>NUCLEOTIDE SEQUENCE [LARGE SCALE MRNA] (ISOFORM 1)</scope>
    <source>
        <tissue>Lymph</tissue>
    </source>
</reference>
<reference key="7">
    <citation type="journal article" date="1990" name="EMBO J.">
        <title>Molecular cloning, primary structure and expression of the human X linked A1S9 gene cDNA which complements the ts A1S9 mouse L cell defect in DNA replication.</title>
        <authorList>
            <person name="Zacksenhaus E."/>
            <person name="Sheinin R."/>
        </authorList>
    </citation>
    <scope>NUCLEOTIDE SEQUENCE [MRNA] OF 257-989</scope>
</reference>
<reference key="8">
    <citation type="submission" date="2007-03" db="UniProtKB">
        <authorList>
            <person name="Lubec G."/>
            <person name="Vishwanath V."/>
        </authorList>
    </citation>
    <scope>PROTEIN SEQUENCE OF 559-581 AND 924-944</scope>
    <scope>IDENTIFICATION BY MASS SPECTROMETRY</scope>
    <source>
        <tissue>Brain</tissue>
        <tissue>Cajal-Retzius cell</tissue>
    </source>
</reference>
<reference key="9">
    <citation type="journal article" date="1992" name="J. Biol. Chem.">
        <title>Isoforms of mammalian ubiquitin-activating enzyme.</title>
        <authorList>
            <person name="Cook J.C."/>
            <person name="Chock P.B."/>
        </authorList>
    </citation>
    <scope>FUNCTION</scope>
    <scope>CATALYTIC ACTIVITY</scope>
    <scope>ALTERNATIVE SPLICING</scope>
    <scope>PATHWAY</scope>
</reference>
<reference key="10">
    <citation type="journal article" date="1992" name="Proc. Natl. Acad. Sci. U.S.A.">
        <title>Immunoelectron microscopic localization of the ubiquitin-activating enzyme E1 in HepG2 cells.</title>
        <authorList>
            <person name="Schwartz A.L."/>
            <person name="Trausch J.S."/>
            <person name="Ciechanover A."/>
            <person name="Slot J.W."/>
            <person name="Geuze H."/>
        </authorList>
    </citation>
    <scope>SUBCELLULAR LOCATION</scope>
</reference>
<reference key="11">
    <citation type="journal article" date="1994" name="J. Biol. Chem.">
        <title>Human ubiquitin-activating enzyme, E1. Indication of potential nuclear and cytoplasmic subpopulations using epitope-tagged cDNA constructs.</title>
        <authorList>
            <person name="Handley-Gearhart P.M."/>
            <person name="Stephen A.G."/>
            <person name="Trausch-Azar J.S."/>
            <person name="Ciechanover A."/>
            <person name="Schwartz A.L."/>
        </authorList>
    </citation>
    <scope>SUBCELLULAR LOCATION</scope>
    <scope>CHARACTERIZATION OF ISOFORM 1 AND ISOFORM 2</scope>
</reference>
<reference key="12">
    <citation type="journal article" date="1997" name="J. Biol. Chem.">
        <title>Identification of a region within the ubiquitin-activating enzyme required for nuclear targeting and phosphorylation.</title>
        <authorList>
            <person name="Stephen A.G."/>
            <person name="Trausch-Azar J.S."/>
            <person name="Handley-Gearhart P.M."/>
            <person name="Ciechanover A."/>
            <person name="Schwartz A.L."/>
        </authorList>
    </citation>
    <scope>PHOSPHORYLATION AT SER-4</scope>
    <scope>SUBCELLULAR LOCATION</scope>
    <scope>MUTAGENESIS OF SER-4 AND 8-LYS--ARG-11</scope>
</reference>
<reference key="13">
    <citation type="journal article" date="2005" name="Biochem. Biophys. Res. Commun.">
        <title>Proteomic identification of proteins conjugated to ISG15 in mouse and human cells.</title>
        <authorList>
            <person name="Giannakopoulos N.V."/>
            <person name="Luo J.K."/>
            <person name="Papov V."/>
            <person name="Zou W."/>
            <person name="Lenschow D.J."/>
            <person name="Jacobs B.S."/>
            <person name="Borden E.C."/>
            <person name="Li J."/>
            <person name="Virgin H.W."/>
            <person name="Zhang D.E."/>
        </authorList>
    </citation>
    <scope>ISGYLATION</scope>
</reference>
<reference key="14">
    <citation type="journal article" date="2005" name="Nat. Biotechnol.">
        <title>Immunoaffinity profiling of tyrosine phosphorylation in cancer cells.</title>
        <authorList>
            <person name="Rush J."/>
            <person name="Moritz A."/>
            <person name="Lee K.A."/>
            <person name="Guo A."/>
            <person name="Goss V.L."/>
            <person name="Spek E.J."/>
            <person name="Zhang H."/>
            <person name="Zha X.-M."/>
            <person name="Polakiewicz R.D."/>
            <person name="Comb M.J."/>
        </authorList>
    </citation>
    <scope>IDENTIFICATION BY MASS SPECTROMETRY [LARGE SCALE ANALYSIS]</scope>
</reference>
<reference key="15">
    <citation type="journal article" date="2005" name="Nature">
        <title>Gigaxonin-controlled degradation of MAP1B light chain is critical to neuronal survival.</title>
        <authorList>
            <person name="Allen E."/>
            <person name="Ding J."/>
            <person name="Wang W."/>
            <person name="Pramanik S."/>
            <person name="Chou J."/>
            <person name="Yau V."/>
            <person name="Yang Y."/>
        </authorList>
    </citation>
    <scope>INTERACTION WITH GAN</scope>
</reference>
<reference key="16">
    <citation type="journal article" date="2008" name="Proc. Natl. Acad. Sci. U.S.A.">
        <title>A quantitative atlas of mitotic phosphorylation.</title>
        <authorList>
            <person name="Dephoure N."/>
            <person name="Zhou C."/>
            <person name="Villen J."/>
            <person name="Beausoleil S.A."/>
            <person name="Bakalarski C.E."/>
            <person name="Elledge S.J."/>
            <person name="Gygi S.P."/>
        </authorList>
    </citation>
    <scope>PHOSPHORYLATION [LARGE SCALE ANALYSIS] AT SER-13; SER-46; THR-800 AND SER-835</scope>
    <scope>IDENTIFICATION BY MASS SPECTROMETRY [LARGE SCALE ANALYSIS]</scope>
    <source>
        <tissue>Cervix carcinoma</tissue>
    </source>
</reference>
<reference key="17">
    <citation type="journal article" date="2009" name="Anal. Chem.">
        <title>Lys-N and trypsin cover complementary parts of the phosphoproteome in a refined SCX-based approach.</title>
        <authorList>
            <person name="Gauci S."/>
            <person name="Helbig A.O."/>
            <person name="Slijper M."/>
            <person name="Krijgsveld J."/>
            <person name="Heck A.J."/>
            <person name="Mohammed S."/>
        </authorList>
    </citation>
    <scope>IDENTIFICATION BY MASS SPECTROMETRY [LARGE SCALE ANALYSIS]</scope>
</reference>
<reference key="18">
    <citation type="journal article" date="2009" name="Sci. Signal.">
        <title>Quantitative phosphoproteomic analysis of T cell receptor signaling reveals system-wide modulation of protein-protein interactions.</title>
        <authorList>
            <person name="Mayya V."/>
            <person name="Lundgren D.H."/>
            <person name="Hwang S.-I."/>
            <person name="Rezaul K."/>
            <person name="Wu L."/>
            <person name="Eng J.K."/>
            <person name="Rodionov V."/>
            <person name="Han D.K."/>
        </authorList>
    </citation>
    <scope>PHOSPHORYLATION [LARGE SCALE ANALYSIS] AT SER-46 AND SER-810</scope>
    <scope>IDENTIFICATION BY MASS SPECTROMETRY [LARGE SCALE ANALYSIS]</scope>
    <source>
        <tissue>Leukemic T-cell</tissue>
    </source>
</reference>
<reference key="19">
    <citation type="journal article" date="2009" name="Science">
        <title>Lysine acetylation targets protein complexes and co-regulates major cellular functions.</title>
        <authorList>
            <person name="Choudhary C."/>
            <person name="Kumar C."/>
            <person name="Gnad F."/>
            <person name="Nielsen M.L."/>
            <person name="Rehman M."/>
            <person name="Walther T.C."/>
            <person name="Olsen J.V."/>
            <person name="Mann M."/>
        </authorList>
    </citation>
    <scope>ACETYLATION [LARGE SCALE ANALYSIS] AT LYS-671 AND LYS-980</scope>
    <scope>IDENTIFICATION BY MASS SPECTROMETRY [LARGE SCALE ANALYSIS]</scope>
</reference>
<reference key="20">
    <citation type="journal article" date="2010" name="Sci. Signal.">
        <title>Quantitative phosphoproteomics reveals widespread full phosphorylation site occupancy during mitosis.</title>
        <authorList>
            <person name="Olsen J.V."/>
            <person name="Vermeulen M."/>
            <person name="Santamaria A."/>
            <person name="Kumar C."/>
            <person name="Miller M.L."/>
            <person name="Jensen L.J."/>
            <person name="Gnad F."/>
            <person name="Cox J."/>
            <person name="Jensen T.S."/>
            <person name="Nigg E.A."/>
            <person name="Brunak S."/>
            <person name="Mann M."/>
        </authorList>
    </citation>
    <scope>PHOSPHORYLATION [LARGE SCALE ANALYSIS] AT SER-46 AND SER-810</scope>
    <scope>IDENTIFICATION BY MASS SPECTROMETRY [LARGE SCALE ANALYSIS]</scope>
    <source>
        <tissue>Cervix carcinoma</tissue>
    </source>
</reference>
<reference key="21">
    <citation type="journal article" date="2011" name="BMC Syst. Biol.">
        <title>Initial characterization of the human central proteome.</title>
        <authorList>
            <person name="Burkard T.R."/>
            <person name="Planyavsky M."/>
            <person name="Kaupe I."/>
            <person name="Breitwieser F.P."/>
            <person name="Buerckstuemmer T."/>
            <person name="Bennett K.L."/>
            <person name="Superti-Furga G."/>
            <person name="Colinge J."/>
        </authorList>
    </citation>
    <scope>IDENTIFICATION BY MASS SPECTROMETRY [LARGE SCALE ANALYSIS]</scope>
</reference>
<reference key="22">
    <citation type="journal article" date="2011" name="Sci. Signal.">
        <title>System-wide temporal characterization of the proteome and phosphoproteome of human embryonic stem cell differentiation.</title>
        <authorList>
            <person name="Rigbolt K.T."/>
            <person name="Prokhorova T.A."/>
            <person name="Akimov V."/>
            <person name="Henningsen J."/>
            <person name="Johansen P.T."/>
            <person name="Kratchmarova I."/>
            <person name="Kassem M."/>
            <person name="Mann M."/>
            <person name="Olsen J.V."/>
            <person name="Blagoev B."/>
        </authorList>
    </citation>
    <scope>PHOSPHORYLATION [LARGE SCALE ANALYSIS] AT SER-46</scope>
    <scope>IDENTIFICATION BY MASS SPECTROMETRY [LARGE SCALE ANALYSIS]</scope>
</reference>
<reference key="23">
    <citation type="journal article" date="2012" name="Cell Cycle">
        <title>Ubiquitin-activating enzyme UBA1 is required for cellular response to DNA damage.</title>
        <authorList>
            <person name="Moudry P."/>
            <person name="Lukas C."/>
            <person name="Macurek L."/>
            <person name="Hanzlikova H."/>
            <person name="Hodny Z."/>
            <person name="Lukas J."/>
            <person name="Bartek J."/>
        </authorList>
    </citation>
    <scope>SUBCELLULAR LOCATION</scope>
    <scope>FUNCTION</scope>
</reference>
<reference key="24">
    <citation type="journal article" date="2012" name="Proc. Natl. Acad. Sci. U.S.A.">
        <title>N-terminal acetylome analyses and functional insights of the N-terminal acetyltransferase NatB.</title>
        <authorList>
            <person name="Van Damme P."/>
            <person name="Lasa M."/>
            <person name="Polevoda B."/>
            <person name="Gazquez C."/>
            <person name="Elosegui-Artola A."/>
            <person name="Kim D.S."/>
            <person name="De Juan-Pardo E."/>
            <person name="Demeyer K."/>
            <person name="Hole K."/>
            <person name="Larrea E."/>
            <person name="Timmerman E."/>
            <person name="Prieto J."/>
            <person name="Arnesen T."/>
            <person name="Sherman F."/>
            <person name="Gevaert K."/>
            <person name="Aldabe R."/>
        </authorList>
    </citation>
    <scope>ACETYLATION [LARGE SCALE ANALYSIS] AT SER-2</scope>
    <scope>ACETYLATION [LARGE SCALE ANALYSIS] AT ALA-2 (ISOFORM 2)</scope>
    <scope>CLEAVAGE OF INITIATOR METHIONINE [LARGE SCALE ANALYSIS]</scope>
    <scope>CLEAVAGE OF INITIATOR METHIONINE [LARGE SCALE ANALYSIS] (ISOFORM 2)</scope>
    <scope>IDENTIFICATION BY MASS SPECTROMETRY [LARGE SCALE ANALYSIS]</scope>
</reference>
<reference key="25">
    <citation type="journal article" date="2013" name="J. Proteome Res.">
        <title>Toward a comprehensive characterization of a human cancer cell phosphoproteome.</title>
        <authorList>
            <person name="Zhou H."/>
            <person name="Di Palma S."/>
            <person name="Preisinger C."/>
            <person name="Peng M."/>
            <person name="Polat A.N."/>
            <person name="Heck A.J."/>
            <person name="Mohammed S."/>
        </authorList>
    </citation>
    <scope>PHOSPHORYLATION [LARGE SCALE ANALYSIS] AT SER-46 AND SER-835</scope>
    <scope>IDENTIFICATION BY MASS SPECTROMETRY [LARGE SCALE ANALYSIS]</scope>
    <source>
        <tissue>Cervix carcinoma</tissue>
        <tissue>Erythroleukemia</tissue>
    </source>
</reference>
<reference key="26">
    <citation type="journal article" date="2014" name="J. Proteomics">
        <title>An enzyme assisted RP-RPLC approach for in-depth analysis of human liver phosphoproteome.</title>
        <authorList>
            <person name="Bian Y."/>
            <person name="Song C."/>
            <person name="Cheng K."/>
            <person name="Dong M."/>
            <person name="Wang F."/>
            <person name="Huang J."/>
            <person name="Sun D."/>
            <person name="Wang L."/>
            <person name="Ye M."/>
            <person name="Zou H."/>
        </authorList>
    </citation>
    <scope>PHOSPHORYLATION [LARGE SCALE ANALYSIS] AT SER-820</scope>
    <scope>IDENTIFICATION BY MASS SPECTROMETRY [LARGE SCALE ANALYSIS]</scope>
    <source>
        <tissue>Liver</tissue>
    </source>
</reference>
<reference key="27">
    <citation type="journal article" date="2015" name="Proteomics">
        <title>N-terminome analysis of the human mitochondrial proteome.</title>
        <authorList>
            <person name="Vaca Jacome A.S."/>
            <person name="Rabilloud T."/>
            <person name="Schaeffer-Reiss C."/>
            <person name="Rompais M."/>
            <person name="Ayoub D."/>
            <person name="Lane L."/>
            <person name="Bairoch A."/>
            <person name="Van Dorsselaer A."/>
            <person name="Carapito C."/>
        </authorList>
    </citation>
    <scope>IDENTIFICATION BY MASS SPECTROMETRY [LARGE SCALE ANALYSIS]</scope>
</reference>
<reference key="28">
    <citation type="journal article" date="2020" name="N. Engl. J. Med.">
        <title>Somatic Mutations in UBA1 and Severe Adult-Onset Autoinflammatory Disease.</title>
        <authorList>
            <person name="Beck D.B."/>
            <person name="Ferrada M.A."/>
            <person name="Sikora K.A."/>
            <person name="Ombrello A.K."/>
            <person name="Collins J.C."/>
            <person name="Pei W."/>
            <person name="Balanda N."/>
            <person name="Ross D.L."/>
            <person name="Ospina Cardona D."/>
            <person name="Wu Z."/>
            <person name="Patel B."/>
            <person name="Manthiram K."/>
            <person name="Groarke E.M."/>
            <person name="Gutierrez-Rodrigues F."/>
            <person name="Hoffmann P."/>
            <person name="Rosenzweig S."/>
            <person name="Nakabo S."/>
            <person name="Dillon L.W."/>
            <person name="Hourigan C.S."/>
            <person name="Tsai W.L."/>
            <person name="Gupta S."/>
            <person name="Carmona-Rivera C."/>
            <person name="Asmar A.J."/>
            <person name="Xu L."/>
            <person name="Oda H."/>
            <person name="Goodspeed W."/>
            <person name="Barron K.S."/>
            <person name="Nehrebecky M."/>
            <person name="Jones A."/>
            <person name="Laird R.S."/>
            <person name="Deuitch N."/>
            <person name="Rowczenio D."/>
            <person name="Rominger E."/>
            <person name="Wells K.V."/>
            <person name="Lee C.R."/>
            <person name="Wang W."/>
            <person name="Trick M."/>
            <person name="Mullikin J."/>
            <person name="Wigerblad G."/>
            <person name="Brooks S."/>
            <person name="Dell'Orso S."/>
            <person name="Deng Z."/>
            <person name="Chae J.J."/>
            <person name="Dulau-Florea A."/>
            <person name="Malicdan M.C.V."/>
            <person name="Novacic D."/>
            <person name="Colbert R.A."/>
            <person name="Kaplan M.J."/>
            <person name="Gadina M."/>
            <person name="Savic S."/>
            <person name="Lachmann H.J."/>
            <person name="Abu-Asab M."/>
            <person name="Solomon B.D."/>
            <person name="Retterer K."/>
            <person name="Gahl W.A."/>
            <person name="Burgess S.M."/>
            <person name="Aksentijevich I."/>
            <person name="Young N.S."/>
            <person name="Calvo K.R."/>
            <person name="Werner A."/>
            <person name="Kastner D.L."/>
            <person name="Grayson P.C."/>
        </authorList>
    </citation>
    <scope>INVOLVEMENT IN VEXAS</scope>
    <scope>VARIANTS VEXAS LEU-41; THR-41 AND VAL-41</scope>
    <scope>CHARACTERIZATION OF VARIANT VEXAS VAL-41</scope>
    <scope>FUNCTION</scope>
    <scope>SUBCELLULAR LOCATION</scope>
    <scope>MUTAGENESIS OF 1-MET--ALA-66; 1-MET--GLY-40; MET-41 AND MET-67</scope>
</reference>
<reference key="29">
    <citation type="journal article" date="2014" name="Biosci. Biotechnol. Biochem.">
        <title>Expression, purification, and crystal structure of N-terminal domains of human ubiquitin-activating enzyme (E1).</title>
        <authorList>
            <person name="Xie S.T."/>
        </authorList>
    </citation>
    <scope>X-RAY CRYSTALLOGRAPHY (2.75 ANGSTROMS) OF 1-439</scope>
</reference>
<reference key="30">
    <citation type="journal article" date="2008" name="Am. J. Hum. Genet.">
        <title>Rare missense and synonymous variants in UBE1 are associated with X-linked infantile spinal muscular atrophy.</title>
        <authorList>
            <person name="Ramser J."/>
            <person name="Ahearn M.E."/>
            <person name="Lenski C."/>
            <person name="Yariz K.O."/>
            <person name="Hellebrand H."/>
            <person name="von Rhein M."/>
            <person name="Clark R.D."/>
            <person name="Schmutzler R.K."/>
            <person name="Lichtner P."/>
            <person name="Hoffman E.P."/>
            <person name="Meindl A."/>
            <person name="Baumbach-Reardon L."/>
        </authorList>
    </citation>
    <scope>VARIANTS SMAX2 ILE-539 AND GLY-547</scope>
</reference>
<reference key="31">
    <citation type="journal article" date="2013" name="Neuromuscul. Disord.">
        <title>Clinical and neuropathological features of X-linked spinal muscular atrophy (SMAX2) associated with a novel mutation in the UBA1 gene.</title>
        <authorList>
            <person name="Dlamini N."/>
            <person name="Josifova D.J."/>
            <person name="Paine S.M."/>
            <person name="Wraige E."/>
            <person name="Pitt M."/>
            <person name="Murphy A.J."/>
            <person name="King A."/>
            <person name="Buk S."/>
            <person name="Smith F."/>
            <person name="Abbs S."/>
            <person name="Sewry C."/>
            <person name="Jacques T.S."/>
            <person name="Jungbluth H."/>
        </authorList>
    </citation>
    <scope>VARIANT SMAX2 VAL-557</scope>
</reference>
<accession>P22314</accession>
<accession>Q5JRR8</accession>
<accession>Q96E13</accession>
<evidence type="ECO:0000250" key="1"/>
<evidence type="ECO:0000250" key="2">
    <source>
        <dbReference type="UniProtKB" id="P22515"/>
    </source>
</evidence>
<evidence type="ECO:0000250" key="3">
    <source>
        <dbReference type="UniProtKB" id="Q02053"/>
    </source>
</evidence>
<evidence type="ECO:0000255" key="4">
    <source>
        <dbReference type="PROSITE-ProRule" id="PRU10132"/>
    </source>
</evidence>
<evidence type="ECO:0000256" key="5">
    <source>
        <dbReference type="SAM" id="MobiDB-lite"/>
    </source>
</evidence>
<evidence type="ECO:0000269" key="6">
    <source>
    </source>
</evidence>
<evidence type="ECO:0000269" key="7">
    <source>
    </source>
</evidence>
<evidence type="ECO:0000269" key="8">
    <source>
    </source>
</evidence>
<evidence type="ECO:0000269" key="9">
    <source>
    </source>
</evidence>
<evidence type="ECO:0000269" key="10">
    <source>
    </source>
</evidence>
<evidence type="ECO:0000269" key="11">
    <source>
    </source>
</evidence>
<evidence type="ECO:0000269" key="12">
    <source>
    </source>
</evidence>
<evidence type="ECO:0000269" key="13">
    <source>
    </source>
</evidence>
<evidence type="ECO:0000269" key="14">
    <source>
    </source>
</evidence>
<evidence type="ECO:0000269" key="15">
    <source>
    </source>
</evidence>
<evidence type="ECO:0000269" key="16">
    <source>
    </source>
</evidence>
<evidence type="ECO:0000269" key="17">
    <source>
    </source>
</evidence>
<evidence type="ECO:0000305" key="18"/>
<evidence type="ECO:0000305" key="19">
    <source>
    </source>
</evidence>
<evidence type="ECO:0000305" key="20">
    <source>
    </source>
</evidence>
<evidence type="ECO:0007744" key="21">
    <source>
    </source>
</evidence>
<evidence type="ECO:0007744" key="22">
    <source>
    </source>
</evidence>
<evidence type="ECO:0007744" key="23">
    <source>
    </source>
</evidence>
<evidence type="ECO:0007744" key="24">
    <source>
    </source>
</evidence>
<evidence type="ECO:0007744" key="25">
    <source>
    </source>
</evidence>
<evidence type="ECO:0007744" key="26">
    <source>
    </source>
</evidence>
<evidence type="ECO:0007744" key="27">
    <source>
    </source>
</evidence>
<evidence type="ECO:0007744" key="28">
    <source>
    </source>
</evidence>
<evidence type="ECO:0007829" key="29">
    <source>
        <dbReference type="PDB" id="4P22"/>
    </source>
</evidence>
<evidence type="ECO:0007829" key="30">
    <source>
        <dbReference type="PDB" id="6DC6"/>
    </source>
</evidence>
<evidence type="ECO:0007829" key="31">
    <source>
        <dbReference type="PDB" id="7PYV"/>
    </source>
</evidence>
<feature type="initiator methionine" description="Removed" evidence="26">
    <location>
        <position position="1"/>
    </location>
</feature>
<feature type="chain" id="PRO_0000194934" description="Ubiquitin-like modifier-activating enzyme 1">
    <location>
        <begin position="2"/>
        <end position="1058"/>
    </location>
</feature>
<feature type="repeat" description="1-1">
    <location>
        <begin position="63"/>
        <end position="199"/>
    </location>
</feature>
<feature type="repeat" description="1-2">
    <location>
        <begin position="459"/>
        <end position="611"/>
    </location>
</feature>
<feature type="region of interest" description="Disordered" evidence="5">
    <location>
        <begin position="1"/>
        <end position="47"/>
    </location>
</feature>
<feature type="region of interest" description="2 approximate repeats">
    <location>
        <begin position="63"/>
        <end position="611"/>
    </location>
</feature>
<feature type="short sequence motif" description="Nuclear localization signal">
    <location>
        <begin position="5"/>
        <end position="11"/>
    </location>
</feature>
<feature type="compositionally biased region" description="Polar residues" evidence="5">
    <location>
        <begin position="21"/>
        <end position="30"/>
    </location>
</feature>
<feature type="active site" description="Glycyl thioester intermediate" evidence="4">
    <location>
        <position position="632"/>
    </location>
</feature>
<feature type="binding site" evidence="2">
    <location>
        <position position="478"/>
    </location>
    <ligand>
        <name>ATP</name>
        <dbReference type="ChEBI" id="CHEBI:30616"/>
    </ligand>
</feature>
<feature type="binding site" evidence="2">
    <location>
        <position position="504"/>
    </location>
    <ligand>
        <name>ATP</name>
        <dbReference type="ChEBI" id="CHEBI:30616"/>
    </ligand>
</feature>
<feature type="binding site" evidence="2">
    <location>
        <position position="515"/>
    </location>
    <ligand>
        <name>ATP</name>
        <dbReference type="ChEBI" id="CHEBI:30616"/>
    </ligand>
</feature>
<feature type="binding site" evidence="2">
    <location>
        <position position="528"/>
    </location>
    <ligand>
        <name>ATP</name>
        <dbReference type="ChEBI" id="CHEBI:30616"/>
    </ligand>
</feature>
<feature type="binding site" evidence="2">
    <location>
        <begin position="576"/>
        <end position="577"/>
    </location>
    <ligand>
        <name>ATP</name>
        <dbReference type="ChEBI" id="CHEBI:30616"/>
    </ligand>
</feature>
<feature type="modified residue" description="N-acetylserine" evidence="26">
    <location>
        <position position="2"/>
    </location>
</feature>
<feature type="modified residue" description="Phosphoserine" evidence="17">
    <location>
        <position position="4"/>
    </location>
</feature>
<feature type="modified residue" description="Phosphoserine" evidence="21">
    <location>
        <position position="13"/>
    </location>
</feature>
<feature type="modified residue" description="Phosphoserine" evidence="3">
    <location>
        <position position="21"/>
    </location>
</feature>
<feature type="modified residue" description="Phosphoserine" evidence="3">
    <location>
        <position position="24"/>
    </location>
</feature>
<feature type="modified residue" description="Phosphoserine" evidence="21 23 24 25 27">
    <location>
        <position position="46"/>
    </location>
</feature>
<feature type="modified residue" description="Phosphotyrosine" evidence="3">
    <location>
        <position position="55"/>
    </location>
</feature>
<feature type="modified residue" description="N6-succinyllysine" evidence="3">
    <location>
        <position position="528"/>
    </location>
</feature>
<feature type="modified residue" description="N6-acetyllysine" evidence="22">
    <location>
        <position position="671"/>
    </location>
</feature>
<feature type="modified residue" description="Phosphothreonine" evidence="21">
    <location>
        <position position="800"/>
    </location>
</feature>
<feature type="modified residue" description="Phosphoserine" evidence="23 24">
    <location>
        <position position="810"/>
    </location>
</feature>
<feature type="modified residue" description="Phosphoserine" evidence="3">
    <location>
        <position position="816"/>
    </location>
</feature>
<feature type="modified residue" description="Phosphoserine" evidence="28">
    <location>
        <position position="820"/>
    </location>
</feature>
<feature type="modified residue" description="Phosphoserine" evidence="21 27">
    <location>
        <position position="835"/>
    </location>
</feature>
<feature type="modified residue" description="N6-acetyllysine" evidence="22">
    <location>
        <position position="980"/>
    </location>
</feature>
<feature type="splice variant" id="VSP_055913" description="In isoform 2." evidence="18">
    <location>
        <begin position="1"/>
        <end position="40"/>
    </location>
</feature>
<feature type="sequence variant" id="VAR_085160" description="In VEXAS; somatic mutation; the underlying nucleotide substitution affects normal alternative translation initiation and leads to aberrant initiation from M-67 to produce a shorter protein with strongly reduced enzymatic activity." evidence="15">
    <original>M</original>
    <variation>L</variation>
    <location>
        <position position="41"/>
    </location>
</feature>
<feature type="sequence variant" id="VAR_085161" description="In VEXAS; somatic mutation; the underlying nucleotide substitution affects normal alternative translation initiation and leads to aberrant initiation from M-67 to produce a shorter protein with strongly reduced enzymatic activity." evidence="15">
    <original>M</original>
    <variation>T</variation>
    <location>
        <position position="41"/>
    </location>
</feature>
<feature type="sequence variant" id="VAR_085162" description="In VEXAS; somatic mutation; does not affect ubiquitin activating enzyme activity; does not affect subcellular localization; the underlying nucleotide substitution affects normal alternative translation initiation and leads to aberrant initiation from M-67 to produce a shorter protein with strongly reduced enzymatic activity." evidence="15">
    <original>M</original>
    <variation>V</variation>
    <location>
        <position position="41"/>
    </location>
</feature>
<feature type="sequence variant" id="VAR_043500" description="In dbSNP:rs2070169.">
    <original>R</original>
    <variation>H</variation>
    <location>
        <position position="447"/>
    </location>
</feature>
<feature type="sequence variant" id="VAR_043501" description="In SMAX2; dbSNP:rs80356545." evidence="11">
    <original>M</original>
    <variation>I</variation>
    <location>
        <position position="539"/>
    </location>
</feature>
<feature type="sequence variant" id="VAR_043502" description="In SMAX2; dbSNP:rs80356546." evidence="11">
    <original>S</original>
    <variation>G</variation>
    <location>
        <position position="547"/>
    </location>
</feature>
<feature type="sequence variant" id="VAR_071121" description="In SMAX2." evidence="14">
    <original>E</original>
    <variation>V</variation>
    <location>
        <position position="557"/>
    </location>
</feature>
<feature type="mutagenesis site" description="Localizes to the cytoplasm." evidence="15">
    <location>
        <begin position="1"/>
        <end position="66"/>
    </location>
</feature>
<feature type="mutagenesis site" description="Localizes to the cytoplasm; when associated with A-67." evidence="20">
    <location>
        <begin position="1"/>
        <end position="40"/>
    </location>
</feature>
<feature type="mutagenesis site" description="Reduces phosphorylation." evidence="17">
    <original>S</original>
    <variation>A</variation>
    <location>
        <position position="4"/>
    </location>
</feature>
<feature type="mutagenesis site" description="Loss of nuclear localization and a 90-95% decrease in the phosphorylation." evidence="17">
    <original>KKRR</original>
    <variation>AAAA</variation>
    <location>
        <begin position="8"/>
        <end position="11"/>
    </location>
</feature>
<feature type="mutagenesis site" description="Localizes to the nucleus; when associated with A-67." evidence="15">
    <original>M</original>
    <variation>A</variation>
    <location>
        <position position="41"/>
    </location>
</feature>
<feature type="mutagenesis site" description="Localizes to the nucleus; when associated with A-41. Localizes to the cytoplasm; when associated with 1-M--G-40 del." evidence="15">
    <original>M</original>
    <variation>A</variation>
    <location>
        <position position="67"/>
    </location>
</feature>
<feature type="sequence conflict" description="In Ref. 1; CAA40296." evidence="18" ref="1">
    <original>D</original>
    <variation>G</variation>
    <location>
        <position position="190"/>
    </location>
</feature>
<feature type="sequence conflict" description="In Ref. 1; CAA40296." evidence="18" ref="1">
    <original>E</original>
    <variation>Q</variation>
    <location>
        <position position="434"/>
    </location>
</feature>
<feature type="turn" evidence="30">
    <location>
        <begin position="52"/>
        <end position="54"/>
    </location>
</feature>
<feature type="helix" evidence="29">
    <location>
        <begin position="55"/>
        <end position="62"/>
    </location>
</feature>
<feature type="strand" evidence="29">
    <location>
        <begin position="74"/>
        <end position="78"/>
    </location>
</feature>
<feature type="helix" evidence="29">
    <location>
        <begin position="82"/>
        <end position="93"/>
    </location>
</feature>
<feature type="strand" evidence="29">
    <location>
        <begin position="97"/>
        <end position="102"/>
    </location>
</feature>
<feature type="helix" evidence="29">
    <location>
        <begin position="109"/>
        <end position="112"/>
    </location>
</feature>
<feature type="helix" evidence="29">
    <location>
        <begin position="120"/>
        <end position="122"/>
    </location>
</feature>
<feature type="helix" evidence="29">
    <location>
        <begin position="127"/>
        <end position="136"/>
    </location>
</feature>
<feature type="strand" evidence="29">
    <location>
        <begin position="140"/>
        <end position="142"/>
    </location>
</feature>
<feature type="strand" evidence="29">
    <location>
        <begin position="144"/>
        <end position="147"/>
    </location>
</feature>
<feature type="helix" evidence="29">
    <location>
        <begin position="153"/>
        <end position="156"/>
    </location>
</feature>
<feature type="strand" evidence="29">
    <location>
        <begin position="160"/>
        <end position="164"/>
    </location>
</feature>
<feature type="helix" evidence="29">
    <location>
        <begin position="169"/>
        <end position="181"/>
    </location>
</feature>
<feature type="strand" evidence="29">
    <location>
        <begin position="185"/>
        <end position="192"/>
    </location>
</feature>
<feature type="strand" evidence="29">
    <location>
        <begin position="195"/>
        <end position="201"/>
    </location>
</feature>
<feature type="strand" evidence="29">
    <location>
        <begin position="206"/>
        <end position="210"/>
    </location>
</feature>
<feature type="strand" evidence="29">
    <location>
        <begin position="219"/>
        <end position="224"/>
    </location>
</feature>
<feature type="strand" evidence="29">
    <location>
        <begin position="226"/>
        <end position="229"/>
    </location>
</feature>
<feature type="strand" evidence="29">
    <location>
        <begin position="231"/>
        <end position="234"/>
    </location>
</feature>
<feature type="strand" evidence="29">
    <location>
        <begin position="244"/>
        <end position="252"/>
    </location>
</feature>
<feature type="helix" evidence="29">
    <location>
        <begin position="257"/>
        <end position="259"/>
    </location>
</feature>
<feature type="strand" evidence="29">
    <location>
        <begin position="265"/>
        <end position="269"/>
    </location>
</feature>
<feature type="strand" evidence="29">
    <location>
        <begin position="271"/>
        <end position="273"/>
    </location>
</feature>
<feature type="strand" evidence="29">
    <location>
        <begin position="291"/>
        <end position="301"/>
    </location>
</feature>
<feature type="helix" evidence="29">
    <location>
        <begin position="306"/>
        <end position="311"/>
    </location>
</feature>
<feature type="helix" evidence="30">
    <location>
        <begin position="320"/>
        <end position="322"/>
    </location>
</feature>
<feature type="helix" evidence="29">
    <location>
        <begin position="326"/>
        <end position="343"/>
    </location>
</feature>
<feature type="helix" evidence="29">
    <location>
        <begin position="352"/>
        <end position="368"/>
    </location>
</feature>
<feature type="turn" evidence="29">
    <location>
        <begin position="371"/>
        <end position="373"/>
    </location>
</feature>
<feature type="helix" evidence="29">
    <location>
        <begin position="380"/>
        <end position="388"/>
    </location>
</feature>
<feature type="helix" evidence="29">
    <location>
        <begin position="395"/>
        <end position="413"/>
    </location>
</feature>
<feature type="strand" evidence="29">
    <location>
        <begin position="422"/>
        <end position="428"/>
    </location>
</feature>
<feature type="helix" evidence="30">
    <location>
        <begin position="429"/>
        <end position="431"/>
    </location>
</feature>
<feature type="turn" evidence="30">
    <location>
        <begin position="440"/>
        <end position="444"/>
    </location>
</feature>
<feature type="helix" evidence="30">
    <location>
        <begin position="452"/>
        <end position="455"/>
    </location>
</feature>
<feature type="helix" evidence="30">
    <location>
        <begin position="460"/>
        <end position="467"/>
    </location>
</feature>
<feature type="strand" evidence="30">
    <location>
        <begin position="470"/>
        <end position="474"/>
    </location>
</feature>
<feature type="helix" evidence="30">
    <location>
        <begin position="478"/>
        <end position="490"/>
    </location>
</feature>
<feature type="turn" evidence="30">
    <location>
        <begin position="491"/>
        <end position="493"/>
    </location>
</feature>
<feature type="strand" evidence="30">
    <location>
        <begin position="499"/>
        <end position="503"/>
    </location>
</feature>
<feature type="helix" evidence="30">
    <location>
        <begin position="510"/>
        <end position="514"/>
    </location>
</feature>
<feature type="helix" evidence="30">
    <location>
        <begin position="528"/>
        <end position="539"/>
    </location>
</feature>
<feature type="strand" evidence="30">
    <location>
        <begin position="545"/>
        <end position="548"/>
    </location>
</feature>
<feature type="helix" evidence="30">
    <location>
        <begin position="555"/>
        <end position="557"/>
    </location>
</feature>
<feature type="turn" evidence="30">
    <location>
        <begin position="558"/>
        <end position="560"/>
    </location>
</feature>
<feature type="helix" evidence="30">
    <location>
        <begin position="562"/>
        <end position="566"/>
    </location>
</feature>
<feature type="strand" evidence="30">
    <location>
        <begin position="570"/>
        <end position="573"/>
    </location>
</feature>
<feature type="helix" evidence="30">
    <location>
        <begin position="578"/>
        <end position="590"/>
    </location>
</feature>
<feature type="strand" evidence="30">
    <location>
        <begin position="595"/>
        <end position="601"/>
    </location>
</feature>
<feature type="strand" evidence="30">
    <location>
        <begin position="604"/>
        <end position="610"/>
    </location>
</feature>
<feature type="turn" evidence="30">
    <location>
        <begin position="612"/>
        <end position="614"/>
    </location>
</feature>
<feature type="helix" evidence="30">
    <location>
        <begin position="618"/>
        <end position="620"/>
    </location>
</feature>
<feature type="helix" evidence="30">
    <location>
        <begin position="632"/>
        <end position="635"/>
    </location>
</feature>
<feature type="helix" evidence="30">
    <location>
        <begin position="641"/>
        <end position="655"/>
    </location>
</feature>
<feature type="helix" evidence="30">
    <location>
        <begin position="657"/>
        <end position="668"/>
    </location>
</feature>
<feature type="helix" evidence="30">
    <location>
        <begin position="672"/>
        <end position="678"/>
    </location>
</feature>
<feature type="strand" evidence="30">
    <location>
        <begin position="681"/>
        <end position="683"/>
    </location>
</feature>
<feature type="helix" evidence="30">
    <location>
        <begin position="684"/>
        <end position="695"/>
    </location>
</feature>
<feature type="turn" evidence="31">
    <location>
        <begin position="696"/>
        <end position="698"/>
    </location>
</feature>
<feature type="helix" evidence="30">
    <location>
        <begin position="703"/>
        <end position="718"/>
    </location>
</feature>
<feature type="helix" evidence="30">
    <location>
        <begin position="720"/>
        <end position="728"/>
    </location>
</feature>
<feature type="turn" evidence="31">
    <location>
        <begin position="736"/>
        <end position="738"/>
    </location>
</feature>
<feature type="strand" evidence="30">
    <location>
        <begin position="740"/>
        <end position="745"/>
    </location>
</feature>
<feature type="strand" evidence="31">
    <location>
        <begin position="756"/>
        <end position="758"/>
    </location>
</feature>
<feature type="helix" evidence="30">
    <location>
        <begin position="759"/>
        <end position="776"/>
    </location>
</feature>
<feature type="helix" evidence="30">
    <location>
        <begin position="784"/>
        <end position="791"/>
    </location>
</feature>
<feature type="helix" evidence="30">
    <location>
        <begin position="817"/>
        <end position="820"/>
    </location>
</feature>
<feature type="helix" evidence="30">
    <location>
        <begin position="822"/>
        <end position="832"/>
    </location>
</feature>
<feature type="turn" evidence="30">
    <location>
        <begin position="836"/>
        <end position="838"/>
    </location>
</feature>
<feature type="helix" evidence="31">
    <location>
        <begin position="854"/>
        <end position="856"/>
    </location>
</feature>
<feature type="helix" evidence="30">
    <location>
        <begin position="858"/>
        <end position="872"/>
    </location>
</feature>
<feature type="helix" evidence="30">
    <location>
        <begin position="880"/>
        <end position="887"/>
    </location>
</feature>
<feature type="helix" evidence="30">
    <location>
        <begin position="895"/>
        <end position="912"/>
    </location>
</feature>
<feature type="turn" evidence="30">
    <location>
        <begin position="913"/>
        <end position="915"/>
    </location>
</feature>
<feature type="strand" evidence="30">
    <location>
        <begin position="924"/>
        <end position="928"/>
    </location>
</feature>
<feature type="turn" evidence="30">
    <location>
        <begin position="929"/>
        <end position="932"/>
    </location>
</feature>
<feature type="strand" evidence="30">
    <location>
        <begin position="933"/>
        <end position="937"/>
    </location>
</feature>
<feature type="strand" evidence="30">
    <location>
        <begin position="944"/>
        <end position="947"/>
    </location>
</feature>
<feature type="strand" evidence="30">
    <location>
        <begin position="950"/>
        <end position="953"/>
    </location>
</feature>
<feature type="strand" evidence="30">
    <location>
        <begin position="957"/>
        <end position="963"/>
    </location>
</feature>
<feature type="strand" evidence="30">
    <location>
        <begin position="965"/>
        <end position="969"/>
    </location>
</feature>
<feature type="helix" evidence="30">
    <location>
        <begin position="972"/>
        <end position="981"/>
    </location>
</feature>
<feature type="strand" evidence="30">
    <location>
        <begin position="986"/>
        <end position="992"/>
    </location>
</feature>
<feature type="strand" evidence="30">
    <location>
        <begin position="995"/>
        <end position="999"/>
    </location>
</feature>
<feature type="helix" evidence="30">
    <location>
        <begin position="1004"/>
        <end position="1011"/>
    </location>
</feature>
<feature type="strand" evidence="30">
    <location>
        <begin position="1012"/>
        <end position="1014"/>
    </location>
</feature>
<feature type="helix" evidence="30">
    <location>
        <begin position="1015"/>
        <end position="1022"/>
    </location>
</feature>
<feature type="strand" evidence="30">
    <location>
        <begin position="1023"/>
        <end position="1025"/>
    </location>
</feature>
<feature type="strand" evidence="30">
    <location>
        <begin position="1035"/>
        <end position="1041"/>
    </location>
</feature>
<feature type="strand" evidence="30">
    <location>
        <begin position="1045"/>
        <end position="1049"/>
    </location>
</feature>
<feature type="strand" evidence="30">
    <location>
        <begin position="1052"/>
        <end position="1056"/>
    </location>
</feature>
<feature type="initiator methionine" description="Removed" evidence="26">
    <location sequence="P22314-2">
        <position position="1"/>
    </location>
</feature>
<feature type="modified residue" description="N-acetylalanine" evidence="26">
    <location sequence="P22314-2">
        <position position="2"/>
    </location>
</feature>